<evidence type="ECO:0000255" key="1">
    <source>
        <dbReference type="HAMAP-Rule" id="MF_00509"/>
    </source>
</evidence>
<evidence type="ECO:0000256" key="2">
    <source>
        <dbReference type="SAM" id="MobiDB-lite"/>
    </source>
</evidence>
<organism>
    <name type="scientific">Escherichia coli (strain 55989 / EAEC)</name>
    <dbReference type="NCBI Taxonomy" id="585055"/>
    <lineage>
        <taxon>Bacteria</taxon>
        <taxon>Pseudomonadati</taxon>
        <taxon>Pseudomonadota</taxon>
        <taxon>Gammaproteobacteria</taxon>
        <taxon>Enterobacterales</taxon>
        <taxon>Enterobacteriaceae</taxon>
        <taxon>Escherichia</taxon>
    </lineage>
</organism>
<dbReference type="EMBL" id="CU928145">
    <property type="protein sequence ID" value="CAU98568.1"/>
    <property type="molecule type" value="Genomic_DNA"/>
</dbReference>
<dbReference type="RefSeq" id="WP_001297862.1">
    <property type="nucleotide sequence ID" value="NC_011748.1"/>
</dbReference>
<dbReference type="SMR" id="B7LCF7"/>
<dbReference type="GeneID" id="75204317"/>
<dbReference type="KEGG" id="eck:EC55989_2702"/>
<dbReference type="HOGENOM" id="CLU_030174_1_0_6"/>
<dbReference type="Proteomes" id="UP000000746">
    <property type="component" value="Chromosome"/>
</dbReference>
<dbReference type="GO" id="GO:0032153">
    <property type="term" value="C:cell division site"/>
    <property type="evidence" value="ECO:0007669"/>
    <property type="project" value="UniProtKB-UniRule"/>
</dbReference>
<dbReference type="GO" id="GO:0005886">
    <property type="term" value="C:plasma membrane"/>
    <property type="evidence" value="ECO:0007669"/>
    <property type="project" value="UniProtKB-SubCell"/>
</dbReference>
<dbReference type="GO" id="GO:0000917">
    <property type="term" value="P:division septum assembly"/>
    <property type="evidence" value="ECO:0007669"/>
    <property type="project" value="TreeGrafter"/>
</dbReference>
<dbReference type="GO" id="GO:0043093">
    <property type="term" value="P:FtsZ-dependent cytokinesis"/>
    <property type="evidence" value="ECO:0007669"/>
    <property type="project" value="UniProtKB-UniRule"/>
</dbReference>
<dbReference type="CDD" id="cd00231">
    <property type="entry name" value="ZipA"/>
    <property type="match status" value="1"/>
</dbReference>
<dbReference type="FunFam" id="3.30.1400.10:FF:000001">
    <property type="entry name" value="Cell division protein ZipA"/>
    <property type="match status" value="1"/>
</dbReference>
<dbReference type="Gene3D" id="3.30.1400.10">
    <property type="entry name" value="ZipA, C-terminal FtsZ-binding domain"/>
    <property type="match status" value="1"/>
</dbReference>
<dbReference type="HAMAP" id="MF_00509">
    <property type="entry name" value="ZipA"/>
    <property type="match status" value="1"/>
</dbReference>
<dbReference type="InterPro" id="IPR011919">
    <property type="entry name" value="Cell_div_ZipA"/>
</dbReference>
<dbReference type="InterPro" id="IPR007449">
    <property type="entry name" value="ZipA_FtsZ-bd_C"/>
</dbReference>
<dbReference type="InterPro" id="IPR036765">
    <property type="entry name" value="ZipA_FtsZ-bd_C_sf"/>
</dbReference>
<dbReference type="NCBIfam" id="TIGR02205">
    <property type="entry name" value="septum_zipA"/>
    <property type="match status" value="1"/>
</dbReference>
<dbReference type="PANTHER" id="PTHR38685">
    <property type="entry name" value="CELL DIVISION PROTEIN ZIPA"/>
    <property type="match status" value="1"/>
</dbReference>
<dbReference type="PANTHER" id="PTHR38685:SF1">
    <property type="entry name" value="CELL DIVISION PROTEIN ZIPA"/>
    <property type="match status" value="1"/>
</dbReference>
<dbReference type="Pfam" id="PF04354">
    <property type="entry name" value="ZipA_C"/>
    <property type="match status" value="1"/>
</dbReference>
<dbReference type="SMART" id="SM00771">
    <property type="entry name" value="ZipA_C"/>
    <property type="match status" value="1"/>
</dbReference>
<dbReference type="SUPFAM" id="SSF64383">
    <property type="entry name" value="Cell-division protein ZipA, C-terminal domain"/>
    <property type="match status" value="1"/>
</dbReference>
<sequence>MMQDLRLILIIVGAIAIIALLVHGFWTSRKERSSMFRDRPLKRMKSKRDDDSYDEDVEDDEGVGEVRVHRVNHAPANAQEHEAARPSPQHQYQPPYASAQPRQPVQQPPEAQVPPQHAPRPAQPVQQPAYQPQPEQPLQQPVSPQVAPAPQPVHSAPQPAQQAFQPAEPVAAPQPEPVAEPAPVMDKPKRKEAVIIMNVAAHHGSELNGELLLNSIQQAGFIFGDMNIYHRHLSPDGSGPALFSLANMVKPGTFDPEMKDFTTPGVTIFMQVPSYGDELQNFKLMLQSAQHIADEVGGVVLDDQRRMMTPQKLREYQDIIREVKDANA</sequence>
<reference key="1">
    <citation type="journal article" date="2009" name="PLoS Genet.">
        <title>Organised genome dynamics in the Escherichia coli species results in highly diverse adaptive paths.</title>
        <authorList>
            <person name="Touchon M."/>
            <person name="Hoede C."/>
            <person name="Tenaillon O."/>
            <person name="Barbe V."/>
            <person name="Baeriswyl S."/>
            <person name="Bidet P."/>
            <person name="Bingen E."/>
            <person name="Bonacorsi S."/>
            <person name="Bouchier C."/>
            <person name="Bouvet O."/>
            <person name="Calteau A."/>
            <person name="Chiapello H."/>
            <person name="Clermont O."/>
            <person name="Cruveiller S."/>
            <person name="Danchin A."/>
            <person name="Diard M."/>
            <person name="Dossat C."/>
            <person name="Karoui M.E."/>
            <person name="Frapy E."/>
            <person name="Garry L."/>
            <person name="Ghigo J.M."/>
            <person name="Gilles A.M."/>
            <person name="Johnson J."/>
            <person name="Le Bouguenec C."/>
            <person name="Lescat M."/>
            <person name="Mangenot S."/>
            <person name="Martinez-Jehanne V."/>
            <person name="Matic I."/>
            <person name="Nassif X."/>
            <person name="Oztas S."/>
            <person name="Petit M.A."/>
            <person name="Pichon C."/>
            <person name="Rouy Z."/>
            <person name="Ruf C.S."/>
            <person name="Schneider D."/>
            <person name="Tourret J."/>
            <person name="Vacherie B."/>
            <person name="Vallenet D."/>
            <person name="Medigue C."/>
            <person name="Rocha E.P.C."/>
            <person name="Denamur E."/>
        </authorList>
    </citation>
    <scope>NUCLEOTIDE SEQUENCE [LARGE SCALE GENOMIC DNA]</scope>
    <source>
        <strain>55989 / EAEC</strain>
    </source>
</reference>
<name>ZIPA_ECO55</name>
<keyword id="KW-0131">Cell cycle</keyword>
<keyword id="KW-0132">Cell division</keyword>
<keyword id="KW-0997">Cell inner membrane</keyword>
<keyword id="KW-1003">Cell membrane</keyword>
<keyword id="KW-0472">Membrane</keyword>
<keyword id="KW-1185">Reference proteome</keyword>
<keyword id="KW-0812">Transmembrane</keyword>
<keyword id="KW-1133">Transmembrane helix</keyword>
<proteinExistence type="inferred from homology"/>
<feature type="chain" id="PRO_1000200692" description="Cell division protein ZipA">
    <location>
        <begin position="1"/>
        <end position="328"/>
    </location>
</feature>
<feature type="topological domain" description="Periplasmic" evidence="1">
    <location>
        <begin position="1"/>
        <end position="6"/>
    </location>
</feature>
<feature type="transmembrane region" description="Helical" evidence="1">
    <location>
        <begin position="7"/>
        <end position="27"/>
    </location>
</feature>
<feature type="topological domain" description="Cytoplasmic" evidence="1">
    <location>
        <begin position="28"/>
        <end position="328"/>
    </location>
</feature>
<feature type="region of interest" description="Disordered" evidence="2">
    <location>
        <begin position="42"/>
        <end position="186"/>
    </location>
</feature>
<feature type="compositionally biased region" description="Acidic residues" evidence="2">
    <location>
        <begin position="51"/>
        <end position="63"/>
    </location>
</feature>
<feature type="compositionally biased region" description="Low complexity" evidence="2">
    <location>
        <begin position="99"/>
        <end position="115"/>
    </location>
</feature>
<feature type="compositionally biased region" description="Low complexity" evidence="2">
    <location>
        <begin position="123"/>
        <end position="171"/>
    </location>
</feature>
<protein>
    <recommendedName>
        <fullName evidence="1">Cell division protein ZipA</fullName>
    </recommendedName>
</protein>
<accession>B7LCF7</accession>
<gene>
    <name evidence="1" type="primary">zipA</name>
    <name type="ordered locus">EC55989_2702</name>
</gene>
<comment type="function">
    <text evidence="1">Essential cell division protein that stabilizes the FtsZ protofilaments by cross-linking them and that serves as a cytoplasmic membrane anchor for the Z ring. Also required for the recruitment to the septal ring of downstream cell division proteins.</text>
</comment>
<comment type="subunit">
    <text evidence="1">Interacts with FtsZ via their C-terminal domains.</text>
</comment>
<comment type="subcellular location">
    <subcellularLocation>
        <location evidence="1">Cell inner membrane</location>
        <topology evidence="1">Single-pass type I membrane protein</topology>
    </subcellularLocation>
    <text evidence="1">Localizes to the Z ring in an FtsZ-dependent manner.</text>
</comment>
<comment type="similarity">
    <text evidence="1">Belongs to the ZipA family.</text>
</comment>